<proteinExistence type="inferred from homology"/>
<sequence length="396" mass="44108">MNDTSFENCIKCTVCTTACPVSRVNPGYPGPKQAGPDGERLRLKDGALYDEALKYCINCKRCEVACPSDVKIGDIIQRARAKYDTTRPSLRNFVLSHTDLMGSVSTPFAPIVNTATSLKPVRQLLDAALKIDHRRTLPKYSFGTFRRWYRSVAAQQAQYKDQVAFFHGCFVNYNHPQLGKDLIKVLNAMGTGVQLLSKEKCCGVPLIANGFTDKARKQAITNVESIREAVGVKGIPVIATSSTCTFALRDEYPEVLNVDNKGLRDHIELATRWLWRKLDEGKTLPLKPLPLKVVYHTPCHMEKMGWTLYTLELLRNIPGLELTVLDSQCCGIAGTYGFKKENYPTSQAIGAPLFRQIEESGADLVVTDCETCKWQIEMSTSLRCEHPITLLAQALA</sequence>
<evidence type="ECO:0000250" key="1"/>
<evidence type="ECO:0000255" key="2">
    <source>
        <dbReference type="PROSITE-ProRule" id="PRU00711"/>
    </source>
</evidence>
<organism>
    <name type="scientific">Escherichia coli O157:H7</name>
    <dbReference type="NCBI Taxonomy" id="83334"/>
    <lineage>
        <taxon>Bacteria</taxon>
        <taxon>Pseudomonadati</taxon>
        <taxon>Pseudomonadota</taxon>
        <taxon>Gammaproteobacteria</taxon>
        <taxon>Enterobacterales</taxon>
        <taxon>Enterobacteriaceae</taxon>
        <taxon>Escherichia</taxon>
    </lineage>
</organism>
<reference key="1">
    <citation type="journal article" date="2001" name="Nature">
        <title>Genome sequence of enterohaemorrhagic Escherichia coli O157:H7.</title>
        <authorList>
            <person name="Perna N.T."/>
            <person name="Plunkett G. III"/>
            <person name="Burland V."/>
            <person name="Mau B."/>
            <person name="Glasner J.D."/>
            <person name="Rose D.J."/>
            <person name="Mayhew G.F."/>
            <person name="Evans P.S."/>
            <person name="Gregor J."/>
            <person name="Kirkpatrick H.A."/>
            <person name="Posfai G."/>
            <person name="Hackett J."/>
            <person name="Klink S."/>
            <person name="Boutin A."/>
            <person name="Shao Y."/>
            <person name="Miller L."/>
            <person name="Grotbeck E.J."/>
            <person name="Davis N.W."/>
            <person name="Lim A."/>
            <person name="Dimalanta E.T."/>
            <person name="Potamousis K."/>
            <person name="Apodaca J."/>
            <person name="Anantharaman T.S."/>
            <person name="Lin J."/>
            <person name="Yen G."/>
            <person name="Schwartz D.C."/>
            <person name="Welch R.A."/>
            <person name="Blattner F.R."/>
        </authorList>
    </citation>
    <scope>NUCLEOTIDE SEQUENCE [LARGE SCALE GENOMIC DNA]</scope>
    <source>
        <strain>O157:H7 / EDL933 / ATCC 700927 / EHEC</strain>
    </source>
</reference>
<reference key="2">
    <citation type="journal article" date="2001" name="DNA Res.">
        <title>Complete genome sequence of enterohemorrhagic Escherichia coli O157:H7 and genomic comparison with a laboratory strain K-12.</title>
        <authorList>
            <person name="Hayashi T."/>
            <person name="Makino K."/>
            <person name="Ohnishi M."/>
            <person name="Kurokawa K."/>
            <person name="Ishii K."/>
            <person name="Yokoyama K."/>
            <person name="Han C.-G."/>
            <person name="Ohtsubo E."/>
            <person name="Nakayama K."/>
            <person name="Murata T."/>
            <person name="Tanaka M."/>
            <person name="Tobe T."/>
            <person name="Iida T."/>
            <person name="Takami H."/>
            <person name="Honda T."/>
            <person name="Sasakawa C."/>
            <person name="Ogasawara N."/>
            <person name="Yasunaga T."/>
            <person name="Kuhara S."/>
            <person name="Shiba T."/>
            <person name="Hattori M."/>
            <person name="Shinagawa H."/>
        </authorList>
    </citation>
    <scope>NUCLEOTIDE SEQUENCE [LARGE SCALE GENOMIC DNA]</scope>
    <source>
        <strain>O157:H7 / Sakai / RIMD 0509952 / EHEC</strain>
    </source>
</reference>
<gene>
    <name type="primary">glpC</name>
    <name type="ordered locus">Z3501</name>
    <name type="ordered locus">ECs3128</name>
</gene>
<comment type="function">
    <text evidence="1">Electron transfer protein; may also function as the membrane anchor for the GlpAB dimer.</text>
</comment>
<comment type="pathway">
    <text>Polyol metabolism; glycerol degradation via glycerol kinase pathway; glycerone phosphate from sn-glycerol 3-phosphate (anaerobic route): step 1/1.</text>
</comment>
<comment type="subunit">
    <text evidence="1">Composed of a catalytic GlpA/B dimer and of GlpC.</text>
</comment>
<comment type="subcellular location">
    <subcellularLocation>
        <location>Cell inner membrane</location>
        <topology>Peripheral membrane protein</topology>
    </subcellularLocation>
    <text evidence="1">Loosely bound to the cytoplasmic membrane often occurring in vesicles associated with fumarate reductase.</text>
</comment>
<name>GLPC_ECO57</name>
<feature type="chain" id="PRO_0000159260" description="Anaerobic glycerol-3-phosphate dehydrogenase subunit C">
    <location>
        <begin position="1"/>
        <end position="396"/>
    </location>
</feature>
<feature type="domain" description="4Fe-4S ferredoxin-type 1" evidence="2">
    <location>
        <begin position="2"/>
        <end position="29"/>
    </location>
</feature>
<feature type="domain" description="4Fe-4S ferredoxin-type 2" evidence="2">
    <location>
        <begin position="45"/>
        <end position="76"/>
    </location>
</feature>
<feature type="binding site" evidence="1">
    <location>
        <position position="9"/>
    </location>
    <ligand>
        <name>[4Fe-4S] cluster</name>
        <dbReference type="ChEBI" id="CHEBI:49883"/>
        <label>1</label>
    </ligand>
</feature>
<feature type="binding site" evidence="1">
    <location>
        <position position="12"/>
    </location>
    <ligand>
        <name>[4Fe-4S] cluster</name>
        <dbReference type="ChEBI" id="CHEBI:49883"/>
        <label>1</label>
    </ligand>
</feature>
<feature type="binding site" evidence="1">
    <location>
        <position position="15"/>
    </location>
    <ligand>
        <name>[4Fe-4S] cluster</name>
        <dbReference type="ChEBI" id="CHEBI:49883"/>
        <label>1</label>
    </ligand>
</feature>
<feature type="binding site" evidence="1">
    <location>
        <position position="19"/>
    </location>
    <ligand>
        <name>[4Fe-4S] cluster</name>
        <dbReference type="ChEBI" id="CHEBI:49883"/>
        <label>2</label>
    </ligand>
</feature>
<feature type="binding site" evidence="1">
    <location>
        <position position="56"/>
    </location>
    <ligand>
        <name>[4Fe-4S] cluster</name>
        <dbReference type="ChEBI" id="CHEBI:49883"/>
        <label>2</label>
    </ligand>
</feature>
<feature type="binding site" evidence="1">
    <location>
        <position position="59"/>
    </location>
    <ligand>
        <name>[4Fe-4S] cluster</name>
        <dbReference type="ChEBI" id="CHEBI:49883"/>
        <label>2</label>
    </ligand>
</feature>
<feature type="binding site" evidence="1">
    <location>
        <position position="62"/>
    </location>
    <ligand>
        <name>[4Fe-4S] cluster</name>
        <dbReference type="ChEBI" id="CHEBI:49883"/>
        <label>2</label>
    </ligand>
</feature>
<feature type="binding site" evidence="1">
    <location>
        <position position="66"/>
    </location>
    <ligand>
        <name>[4Fe-4S] cluster</name>
        <dbReference type="ChEBI" id="CHEBI:49883"/>
        <label>1</label>
    </ligand>
</feature>
<protein>
    <recommendedName>
        <fullName>Anaerobic glycerol-3-phosphate dehydrogenase subunit C</fullName>
        <shortName>G-3-P dehydrogenase</shortName>
    </recommendedName>
</protein>
<dbReference type="EMBL" id="AE005174">
    <property type="protein sequence ID" value="AAG57374.1"/>
    <property type="molecule type" value="Genomic_DNA"/>
</dbReference>
<dbReference type="EMBL" id="BA000007">
    <property type="protein sequence ID" value="BAB36551.1"/>
    <property type="molecule type" value="Genomic_DNA"/>
</dbReference>
<dbReference type="PIR" id="B85864">
    <property type="entry name" value="B85864"/>
</dbReference>
<dbReference type="PIR" id="H91019">
    <property type="entry name" value="H91019"/>
</dbReference>
<dbReference type="RefSeq" id="NP_311155.1">
    <property type="nucleotide sequence ID" value="NC_002695.1"/>
</dbReference>
<dbReference type="RefSeq" id="WP_001000379.1">
    <property type="nucleotide sequence ID" value="NZ_VOAI01000001.1"/>
</dbReference>
<dbReference type="STRING" id="155864.Z3501"/>
<dbReference type="GeneID" id="75172373"/>
<dbReference type="GeneID" id="916836"/>
<dbReference type="KEGG" id="ece:Z3501"/>
<dbReference type="KEGG" id="ecs:ECs_3128"/>
<dbReference type="PATRIC" id="fig|386585.9.peg.3262"/>
<dbReference type="eggNOG" id="COG0247">
    <property type="taxonomic scope" value="Bacteria"/>
</dbReference>
<dbReference type="HOGENOM" id="CLU_023081_7_1_6"/>
<dbReference type="OMA" id="AYYHGCY"/>
<dbReference type="UniPathway" id="UPA00618">
    <property type="reaction ID" value="UER00673"/>
</dbReference>
<dbReference type="Proteomes" id="UP000000558">
    <property type="component" value="Chromosome"/>
</dbReference>
<dbReference type="Proteomes" id="UP000002519">
    <property type="component" value="Chromosome"/>
</dbReference>
<dbReference type="GO" id="GO:0009331">
    <property type="term" value="C:glycerol-3-phosphate dehydrogenase (FAD) complex"/>
    <property type="evidence" value="ECO:0007669"/>
    <property type="project" value="InterPro"/>
</dbReference>
<dbReference type="GO" id="GO:0005886">
    <property type="term" value="C:plasma membrane"/>
    <property type="evidence" value="ECO:0007669"/>
    <property type="project" value="UniProtKB-SubCell"/>
</dbReference>
<dbReference type="GO" id="GO:0051539">
    <property type="term" value="F:4 iron, 4 sulfur cluster binding"/>
    <property type="evidence" value="ECO:0007669"/>
    <property type="project" value="UniProtKB-KW"/>
</dbReference>
<dbReference type="GO" id="GO:0046872">
    <property type="term" value="F:metal ion binding"/>
    <property type="evidence" value="ECO:0007669"/>
    <property type="project" value="UniProtKB-KW"/>
</dbReference>
<dbReference type="GO" id="GO:0016491">
    <property type="term" value="F:oxidoreductase activity"/>
    <property type="evidence" value="ECO:0007669"/>
    <property type="project" value="UniProtKB-ARBA"/>
</dbReference>
<dbReference type="GO" id="GO:0009061">
    <property type="term" value="P:anaerobic respiration"/>
    <property type="evidence" value="ECO:0007669"/>
    <property type="project" value="InterPro"/>
</dbReference>
<dbReference type="GO" id="GO:0019563">
    <property type="term" value="P:glycerol catabolic process"/>
    <property type="evidence" value="ECO:0007669"/>
    <property type="project" value="UniProtKB-UniPathway"/>
</dbReference>
<dbReference type="FunFam" id="1.10.1060.10:FF:000008">
    <property type="entry name" value="Glycerol-3-phosphate dehydrogenase, anaerobic, C subunit"/>
    <property type="match status" value="1"/>
</dbReference>
<dbReference type="Gene3D" id="1.10.1060.10">
    <property type="entry name" value="Alpha-helical ferredoxin"/>
    <property type="match status" value="1"/>
</dbReference>
<dbReference type="InterPro" id="IPR017896">
    <property type="entry name" value="4Fe4S_Fe-S-bd"/>
</dbReference>
<dbReference type="InterPro" id="IPR017900">
    <property type="entry name" value="4Fe4S_Fe_S_CS"/>
</dbReference>
<dbReference type="InterPro" id="IPR004017">
    <property type="entry name" value="Cys_rich_dom"/>
</dbReference>
<dbReference type="InterPro" id="IPR017753">
    <property type="entry name" value="G3P_DH_GlpC_su"/>
</dbReference>
<dbReference type="InterPro" id="IPR009051">
    <property type="entry name" value="Helical_ferredxn"/>
</dbReference>
<dbReference type="NCBIfam" id="TIGR03379">
    <property type="entry name" value="glycerol3P_GlpC"/>
    <property type="match status" value="1"/>
</dbReference>
<dbReference type="NCBIfam" id="NF008369">
    <property type="entry name" value="PRK11168.1"/>
    <property type="match status" value="1"/>
</dbReference>
<dbReference type="PANTHER" id="PTHR32479:SF19">
    <property type="entry name" value="ANAEROBIC GLYCEROL-3-PHOSPHATE DEHYDROGENASE SUBUNIT C"/>
    <property type="match status" value="1"/>
</dbReference>
<dbReference type="PANTHER" id="PTHR32479">
    <property type="entry name" value="GLYCOLATE OXIDASE IRON-SULFUR SUBUNIT"/>
    <property type="match status" value="1"/>
</dbReference>
<dbReference type="Pfam" id="PF02754">
    <property type="entry name" value="CCG"/>
    <property type="match status" value="2"/>
</dbReference>
<dbReference type="Pfam" id="PF13183">
    <property type="entry name" value="Fer4_8"/>
    <property type="match status" value="1"/>
</dbReference>
<dbReference type="SUPFAM" id="SSF46548">
    <property type="entry name" value="alpha-helical ferredoxin"/>
    <property type="match status" value="1"/>
</dbReference>
<dbReference type="PROSITE" id="PS00198">
    <property type="entry name" value="4FE4S_FER_1"/>
    <property type="match status" value="2"/>
</dbReference>
<dbReference type="PROSITE" id="PS51379">
    <property type="entry name" value="4FE4S_FER_2"/>
    <property type="match status" value="2"/>
</dbReference>
<keyword id="KW-0004">4Fe-4S</keyword>
<keyword id="KW-0997">Cell inner membrane</keyword>
<keyword id="KW-1003">Cell membrane</keyword>
<keyword id="KW-0249">Electron transport</keyword>
<keyword id="KW-0408">Iron</keyword>
<keyword id="KW-0411">Iron-sulfur</keyword>
<keyword id="KW-0472">Membrane</keyword>
<keyword id="KW-0479">Metal-binding</keyword>
<keyword id="KW-1185">Reference proteome</keyword>
<keyword id="KW-0677">Repeat</keyword>
<keyword id="KW-0813">Transport</keyword>
<accession>P0A997</accession>
<accession>P13034</accession>
<accession>P76927</accession>
<accession>P77679</accession>